<organism>
    <name type="scientific">Emericella nidulans (strain FGSC A4 / ATCC 38163 / CBS 112.46 / NRRL 194 / M139)</name>
    <name type="common">Aspergillus nidulans</name>
    <dbReference type="NCBI Taxonomy" id="227321"/>
    <lineage>
        <taxon>Eukaryota</taxon>
        <taxon>Fungi</taxon>
        <taxon>Dikarya</taxon>
        <taxon>Ascomycota</taxon>
        <taxon>Pezizomycotina</taxon>
        <taxon>Eurotiomycetes</taxon>
        <taxon>Eurotiomycetidae</taxon>
        <taxon>Eurotiales</taxon>
        <taxon>Aspergillaceae</taxon>
        <taxon>Aspergillus</taxon>
        <taxon>Aspergillus subgen. Nidulantes</taxon>
    </lineage>
</organism>
<feature type="chain" id="PRO_0000314744" description="COP9 signalosome complex subunit 4">
    <location>
        <begin position="1"/>
        <end position="408"/>
    </location>
</feature>
<feature type="domain" description="PCI" evidence="2">
    <location>
        <begin position="194"/>
        <end position="374"/>
    </location>
</feature>
<evidence type="ECO:0000250" key="1"/>
<evidence type="ECO:0000255" key="2">
    <source>
        <dbReference type="PROSITE-ProRule" id="PRU01185"/>
    </source>
</evidence>
<evidence type="ECO:0000269" key="3">
    <source>
    </source>
</evidence>
<evidence type="ECO:0000305" key="4"/>
<sequence length="408" mass="44876">MPSQKIISALAEIESSASPQNKLQLYNDLLSETVSASPEPQLADDLIYYLDSVLSEDLSIVAARPILDSFIYTLRKLSSETQIKVAQHAVNLLQSRSASVEEQDAQIREILADAYEAEEEYIAAARALQGIHIDSSQRLVSDSAKVKLWIRIVRLYLEEDDTTSAEAFLNRIKNLPSKIEDHELKLHFRLSQARIQDARRRFLDASQEYFAVSLAAGVDESDRLQALAAAIRCAVLAPAGPQRSRTLATLYKDDRATSVEEFGILEKMFLDRLLTPEEVSAFAQRLAPHQLAQTADGTTVLDKAVVEHNLVAASKLYENIKTDALGAILGLQASGDLTAGEKAEAYAARMVEQGRLSGSIDQIDGIIYFESNTTATGRHIRQWDAGVQGLSEGVERVATNIAEGHLVR</sequence>
<reference key="1">
    <citation type="journal article" date="2007" name="Proc. Natl. Acad. Sci. U.S.A.">
        <title>An eight-subunit COP9 signalosome with an intact JAMM motif is required for fungal fruit body formation.</title>
        <authorList>
            <person name="Busch S."/>
            <person name="Schwier E.U."/>
            <person name="Nahlik K."/>
            <person name="Bayram O."/>
            <person name="Helmstaedt K."/>
            <person name="Draht O.W."/>
            <person name="Krappmann S."/>
            <person name="Valerius O."/>
            <person name="Lipscomb W.N."/>
            <person name="Braus G.H."/>
        </authorList>
    </citation>
    <scope>NUCLEOTIDE SEQUENCE [GENOMIC DNA]</scope>
    <scope>FUNCTION</scope>
    <scope>IDENTIFICATION IN THE CSN COMPLEX</scope>
    <scope>IDENTIFICATION BY MASS SPECTROMETRY</scope>
    <source>
        <strain>FGSC A4 / ATCC 38163 / CBS 112.46 / NRRL 194 / M139</strain>
    </source>
</reference>
<reference key="2">
    <citation type="journal article" date="2005" name="Nature">
        <title>Sequencing of Aspergillus nidulans and comparative analysis with A. fumigatus and A. oryzae.</title>
        <authorList>
            <person name="Galagan J.E."/>
            <person name="Calvo S.E."/>
            <person name="Cuomo C."/>
            <person name="Ma L.-J."/>
            <person name="Wortman J.R."/>
            <person name="Batzoglou S."/>
            <person name="Lee S.-I."/>
            <person name="Bastuerkmen M."/>
            <person name="Spevak C.C."/>
            <person name="Clutterbuck J."/>
            <person name="Kapitonov V."/>
            <person name="Jurka J."/>
            <person name="Scazzocchio C."/>
            <person name="Farman M.L."/>
            <person name="Butler J."/>
            <person name="Purcell S."/>
            <person name="Harris S."/>
            <person name="Braus G.H."/>
            <person name="Draht O."/>
            <person name="Busch S."/>
            <person name="D'Enfert C."/>
            <person name="Bouchier C."/>
            <person name="Goldman G.H."/>
            <person name="Bell-Pedersen D."/>
            <person name="Griffiths-Jones S."/>
            <person name="Doonan J.H."/>
            <person name="Yu J."/>
            <person name="Vienken K."/>
            <person name="Pain A."/>
            <person name="Freitag M."/>
            <person name="Selker E.U."/>
            <person name="Archer D.B."/>
            <person name="Penalva M.A."/>
            <person name="Oakley B.R."/>
            <person name="Momany M."/>
            <person name="Tanaka T."/>
            <person name="Kumagai T."/>
            <person name="Asai K."/>
            <person name="Machida M."/>
            <person name="Nierman W.C."/>
            <person name="Denning D.W."/>
            <person name="Caddick M.X."/>
            <person name="Hynes M."/>
            <person name="Paoletti M."/>
            <person name="Fischer R."/>
            <person name="Miller B.L."/>
            <person name="Dyer P.S."/>
            <person name="Sachs M.S."/>
            <person name="Osmani S.A."/>
            <person name="Birren B.W."/>
        </authorList>
    </citation>
    <scope>NUCLEOTIDE SEQUENCE [LARGE SCALE GENOMIC DNA]</scope>
    <source>
        <strain>FGSC A4 / ATCC 38163 / CBS 112.46 / NRRL 194 / M139</strain>
    </source>
</reference>
<reference key="3">
    <citation type="journal article" date="2009" name="Fungal Genet. Biol.">
        <title>The 2008 update of the Aspergillus nidulans genome annotation: a community effort.</title>
        <authorList>
            <person name="Wortman J.R."/>
            <person name="Gilsenan J.M."/>
            <person name="Joardar V."/>
            <person name="Deegan J."/>
            <person name="Clutterbuck J."/>
            <person name="Andersen M.R."/>
            <person name="Archer D."/>
            <person name="Bencina M."/>
            <person name="Braus G."/>
            <person name="Coutinho P."/>
            <person name="von Dohren H."/>
            <person name="Doonan J."/>
            <person name="Driessen A.J."/>
            <person name="Durek P."/>
            <person name="Espeso E."/>
            <person name="Fekete E."/>
            <person name="Flipphi M."/>
            <person name="Estrada C.G."/>
            <person name="Geysens S."/>
            <person name="Goldman G."/>
            <person name="de Groot P.W."/>
            <person name="Hansen K."/>
            <person name="Harris S.D."/>
            <person name="Heinekamp T."/>
            <person name="Helmstaedt K."/>
            <person name="Henrissat B."/>
            <person name="Hofmann G."/>
            <person name="Homan T."/>
            <person name="Horio T."/>
            <person name="Horiuchi H."/>
            <person name="James S."/>
            <person name="Jones M."/>
            <person name="Karaffa L."/>
            <person name="Karanyi Z."/>
            <person name="Kato M."/>
            <person name="Keller N."/>
            <person name="Kelly D.E."/>
            <person name="Kiel J.A."/>
            <person name="Kim J.M."/>
            <person name="van der Klei I.J."/>
            <person name="Klis F.M."/>
            <person name="Kovalchuk A."/>
            <person name="Krasevec N."/>
            <person name="Kubicek C.P."/>
            <person name="Liu B."/>
            <person name="Maccabe A."/>
            <person name="Meyer V."/>
            <person name="Mirabito P."/>
            <person name="Miskei M."/>
            <person name="Mos M."/>
            <person name="Mullins J."/>
            <person name="Nelson D.R."/>
            <person name="Nielsen J."/>
            <person name="Oakley B.R."/>
            <person name="Osmani S.A."/>
            <person name="Pakula T."/>
            <person name="Paszewski A."/>
            <person name="Paulsen I."/>
            <person name="Pilsyk S."/>
            <person name="Pocsi I."/>
            <person name="Punt P.J."/>
            <person name="Ram A.F."/>
            <person name="Ren Q."/>
            <person name="Robellet X."/>
            <person name="Robson G."/>
            <person name="Seiboth B."/>
            <person name="van Solingen P."/>
            <person name="Specht T."/>
            <person name="Sun J."/>
            <person name="Taheri-Talesh N."/>
            <person name="Takeshita N."/>
            <person name="Ussery D."/>
            <person name="vanKuyk P.A."/>
            <person name="Visser H."/>
            <person name="van de Vondervoort P.J."/>
            <person name="de Vries R.P."/>
            <person name="Walton J."/>
            <person name="Xiang X."/>
            <person name="Xiong Y."/>
            <person name="Zeng A.P."/>
            <person name="Brandt B.W."/>
            <person name="Cornell M.J."/>
            <person name="van den Hondel C.A."/>
            <person name="Visser J."/>
            <person name="Oliver S.G."/>
            <person name="Turner G."/>
        </authorList>
    </citation>
    <scope>GENOME REANNOTATION</scope>
    <source>
        <strain>FGSC A4 / ATCC 38163 / CBS 112.46 / NRRL 194 / M139</strain>
    </source>
</reference>
<protein>
    <recommendedName>
        <fullName>COP9 signalosome complex subunit 4</fullName>
        <shortName>Signalosome subunit 4</shortName>
    </recommendedName>
</protein>
<accession>Q9C467</accession>
<accession>C8VMX6</accession>
<accession>Q5BD41</accession>
<dbReference type="EMBL" id="AF236662">
    <property type="protein sequence ID" value="AAK14055.2"/>
    <property type="molecule type" value="Genomic_DNA"/>
</dbReference>
<dbReference type="EMBL" id="AACD01000025">
    <property type="protein sequence ID" value="EAA64246.1"/>
    <property type="molecule type" value="Genomic_DNA"/>
</dbReference>
<dbReference type="EMBL" id="BN001307">
    <property type="protein sequence ID" value="CBF85069.1"/>
    <property type="molecule type" value="Genomic_DNA"/>
</dbReference>
<dbReference type="RefSeq" id="XP_659143.1">
    <property type="nucleotide sequence ID" value="XM_654051.2"/>
</dbReference>
<dbReference type="SMR" id="Q9C467"/>
<dbReference type="DIP" id="DIP-60928N"/>
<dbReference type="IntAct" id="Q9C467">
    <property type="interactions" value="4"/>
</dbReference>
<dbReference type="STRING" id="227321.Q9C467"/>
<dbReference type="EnsemblFungi" id="CBF85069">
    <property type="protein sequence ID" value="CBF85069"/>
    <property type="gene ID" value="ANIA_01539"/>
</dbReference>
<dbReference type="GeneID" id="2875265"/>
<dbReference type="KEGG" id="ani:ANIA_01539"/>
<dbReference type="eggNOG" id="KOG1497">
    <property type="taxonomic scope" value="Eukaryota"/>
</dbReference>
<dbReference type="HOGENOM" id="CLU_028132_1_1_1"/>
<dbReference type="InParanoid" id="Q9C467"/>
<dbReference type="OMA" id="KNIMHTV"/>
<dbReference type="OrthoDB" id="295656at2759"/>
<dbReference type="Proteomes" id="UP000000560">
    <property type="component" value="Chromosome VII"/>
</dbReference>
<dbReference type="GO" id="GO:0008180">
    <property type="term" value="C:COP9 signalosome"/>
    <property type="evidence" value="ECO:0000318"/>
    <property type="project" value="GO_Central"/>
</dbReference>
<dbReference type="GO" id="GO:0005737">
    <property type="term" value="C:cytoplasm"/>
    <property type="evidence" value="ECO:0007669"/>
    <property type="project" value="UniProtKB-SubCell"/>
</dbReference>
<dbReference type="FunFam" id="1.10.10.10:FF:000190">
    <property type="entry name" value="COP9 signalosome complex subunit 4"/>
    <property type="match status" value="1"/>
</dbReference>
<dbReference type="Gene3D" id="1.10.10.10">
    <property type="entry name" value="Winged helix-like DNA-binding domain superfamily/Winged helix DNA-binding domain"/>
    <property type="match status" value="1"/>
</dbReference>
<dbReference type="InterPro" id="IPR000717">
    <property type="entry name" value="PCI_dom"/>
</dbReference>
<dbReference type="InterPro" id="IPR054559">
    <property type="entry name" value="PSMD12-CSN4-like_N"/>
</dbReference>
<dbReference type="InterPro" id="IPR040134">
    <property type="entry name" value="PSMD12/CSN4"/>
</dbReference>
<dbReference type="InterPro" id="IPR036388">
    <property type="entry name" value="WH-like_DNA-bd_sf"/>
</dbReference>
<dbReference type="InterPro" id="IPR036390">
    <property type="entry name" value="WH_DNA-bd_sf"/>
</dbReference>
<dbReference type="PANTHER" id="PTHR10855">
    <property type="entry name" value="26S PROTEASOME NON-ATPASE REGULATORY SUBUNIT 12/COP9 SIGNALOSOME COMPLEX SUBUNIT 4"/>
    <property type="match status" value="1"/>
</dbReference>
<dbReference type="PANTHER" id="PTHR10855:SF2">
    <property type="entry name" value="COP9 SIGNALOSOME COMPLEX SUBUNIT 4"/>
    <property type="match status" value="1"/>
</dbReference>
<dbReference type="Pfam" id="PF01399">
    <property type="entry name" value="PCI"/>
    <property type="match status" value="1"/>
</dbReference>
<dbReference type="Pfam" id="PF22241">
    <property type="entry name" value="PSMD12-CSN4_N"/>
    <property type="match status" value="1"/>
</dbReference>
<dbReference type="SMART" id="SM00088">
    <property type="entry name" value="PINT"/>
    <property type="match status" value="1"/>
</dbReference>
<dbReference type="SUPFAM" id="SSF46785">
    <property type="entry name" value="Winged helix' DNA-binding domain"/>
    <property type="match status" value="1"/>
</dbReference>
<dbReference type="PROSITE" id="PS50250">
    <property type="entry name" value="PCI"/>
    <property type="match status" value="1"/>
</dbReference>
<comment type="function">
    <text evidence="1 3">Component of the COP9 signalosome (CSN) complex that acts as an regulator of the ubiquitin (Ubl) conjugation pathway by mediating the deneddylation of the cullin subunit of SCF-type E3 ubiquitin-protein ligase complexes (By similarity). The CSN complex seems to link protein degradation to sexual development. Required for fruit body formation.</text>
</comment>
<comment type="subunit">
    <text evidence="3">Component of the COP9 signalosome (CSN) complex.</text>
</comment>
<comment type="subcellular location">
    <subcellularLocation>
        <location evidence="1">Cytoplasm</location>
    </subcellularLocation>
    <subcellularLocation>
        <location evidence="1">Nucleus</location>
    </subcellularLocation>
</comment>
<comment type="similarity">
    <text evidence="4">Belongs to the CSN4 family.</text>
</comment>
<keyword id="KW-0963">Cytoplasm</keyword>
<keyword id="KW-0539">Nucleus</keyword>
<keyword id="KW-1185">Reference proteome</keyword>
<keyword id="KW-0736">Signalosome</keyword>
<gene>
    <name type="primary">csnD</name>
    <name type="synonym">csn4</name>
    <name type="ORF">AN1539</name>
</gene>
<name>CSN4_EMENI</name>
<proteinExistence type="evidence at protein level"/>